<name>NIFT_AZOVI</name>
<dbReference type="EMBL" id="M20568">
    <property type="protein sequence ID" value="AAA64712.1"/>
    <property type="molecule type" value="Genomic_DNA"/>
</dbReference>
<dbReference type="EMBL" id="M11579">
    <property type="protein sequence ID" value="AAA22145.1"/>
    <property type="molecule type" value="Genomic_DNA"/>
</dbReference>
<dbReference type="PIR" id="A32055">
    <property type="entry name" value="A32055"/>
</dbReference>
<dbReference type="RefSeq" id="WP_012698834.1">
    <property type="nucleotide sequence ID" value="NZ_FPKM01000020.1"/>
</dbReference>
<dbReference type="SMR" id="P09427"/>
<dbReference type="GeneID" id="88183608"/>
<dbReference type="OMA" id="MPIVIFR"/>
<dbReference type="GO" id="GO:0009399">
    <property type="term" value="P:nitrogen fixation"/>
    <property type="evidence" value="ECO:0007669"/>
    <property type="project" value="UniProtKB-KW"/>
</dbReference>
<dbReference type="Gene3D" id="2.40.50.240">
    <property type="entry name" value="NifT/FixU-like"/>
    <property type="match status" value="1"/>
</dbReference>
<dbReference type="InterPro" id="IPR009727">
    <property type="entry name" value="NifT"/>
</dbReference>
<dbReference type="InterPro" id="IPR024044">
    <property type="entry name" value="NifT/FixU_barrel-like_dom_sf"/>
</dbReference>
<dbReference type="NCBIfam" id="TIGR02934">
    <property type="entry name" value="nifT_nitrog"/>
    <property type="match status" value="1"/>
</dbReference>
<dbReference type="Pfam" id="PF06988">
    <property type="entry name" value="NifT"/>
    <property type="match status" value="1"/>
</dbReference>
<dbReference type="SUPFAM" id="SSF159203">
    <property type="entry name" value="NifT/FixU-like"/>
    <property type="match status" value="1"/>
</dbReference>
<gene>
    <name type="primary">nifT</name>
</gene>
<accession>P09427</accession>
<reference key="1">
    <citation type="journal article" date="1989" name="J. Bacteriol.">
        <title>Physical and genetic map of the major nif gene cluster from Azotobacter vinelandii.</title>
        <authorList>
            <person name="Jacobson M.R."/>
            <person name="Brigle K.E."/>
            <person name="Bennett L.T."/>
            <person name="Setterquist R.A."/>
            <person name="Wilson M.S."/>
            <person name="Cash V.L."/>
            <person name="Beynon J."/>
            <person name="Newton W.E."/>
            <person name="Dean D.R."/>
        </authorList>
    </citation>
    <scope>NUCLEOTIDE SEQUENCE [GENOMIC DNA]</scope>
    <source>
        <strain>ATCC 13705 / OP1 / DSM 366 / NCIMB 11614 / LMG 3878 / UW</strain>
    </source>
</reference>
<reference key="2">
    <citation type="journal article" date="1985" name="Gene">
        <title>Complete nucleotide sequence of the Azotobacter vinelandii nitrogenase structural gene cluster.</title>
        <authorList>
            <person name="Brigle K.E."/>
            <person name="Newton W.E."/>
            <person name="Dean D.R."/>
        </authorList>
    </citation>
    <scope>NUCLEOTIDE SEQUENCE [GENOMIC DNA] OF 1-62</scope>
    <source>
        <strain>ATCC 13705 / OP1 / DSM 366 / NCIMB 11614 / LMG 3878 / UW</strain>
    </source>
</reference>
<protein>
    <recommendedName>
        <fullName>Protein NifT</fullName>
    </recommendedName>
</protein>
<proteinExistence type="predicted"/>
<feature type="chain" id="PRO_0000096825" description="Protein NifT">
    <location>
        <begin position="1"/>
        <end position="72"/>
    </location>
</feature>
<sequence length="72" mass="8056">MPSVMIRRNDEGQLTFYIAKKDQEEIVVSLEHDSPELWGGEVTLGDGSTYFIEPIPQPKLPITVRAKRAGEA</sequence>
<keyword id="KW-0535">Nitrogen fixation</keyword>
<organism>
    <name type="scientific">Azotobacter vinelandii</name>
    <dbReference type="NCBI Taxonomy" id="354"/>
    <lineage>
        <taxon>Bacteria</taxon>
        <taxon>Pseudomonadati</taxon>
        <taxon>Pseudomonadota</taxon>
        <taxon>Gammaproteobacteria</taxon>
        <taxon>Pseudomonadales</taxon>
        <taxon>Pseudomonadaceae</taxon>
        <taxon>Azotobacter</taxon>
    </lineage>
</organism>